<feature type="signal peptide" evidence="2">
    <location>
        <begin position="1"/>
        <end position="18"/>
    </location>
</feature>
<feature type="chain" id="PRO_0000394056" description="Probable endo-beta-1,4-glucanase B">
    <location>
        <begin position="19"/>
        <end position="332"/>
    </location>
</feature>
<feature type="active site" description="Proton donor" evidence="1">
    <location>
        <position position="160"/>
    </location>
</feature>
<feature type="active site" description="Nucleophile" evidence="1">
    <location>
        <position position="267"/>
    </location>
</feature>
<feature type="glycosylation site" description="N-linked (GlcNAc...) asparagine" evidence="2">
    <location>
        <position position="38"/>
    </location>
</feature>
<feature type="glycosylation site" description="N-linked (GlcNAc...) asparagine" evidence="2">
    <location>
        <position position="100"/>
    </location>
</feature>
<feature type="glycosylation site" description="N-linked (GlcNAc...) asparagine" evidence="2">
    <location>
        <position position="212"/>
    </location>
</feature>
<feature type="glycosylation site" description="N-linked (GlcNAc...) asparagine" evidence="2">
    <location>
        <position position="289"/>
    </location>
</feature>
<reference key="1">
    <citation type="journal article" date="2003" name="Biosci. Biotechnol. Biochem.">
        <title>Cloning and sequence analysis of endoglucanase genes from an industrial fungus, Aspergillus kawachii.</title>
        <authorList>
            <person name="Hara Y."/>
            <person name="Hinoki Y."/>
            <person name="Shimoi H."/>
            <person name="Ito K."/>
        </authorList>
    </citation>
    <scope>NUCLEOTIDE SEQUENCE [GENOMIC DNA]</scope>
    <source>
        <strain>NBRC 4308</strain>
    </source>
</reference>
<reference key="2">
    <citation type="journal article" date="2011" name="Eukaryot. Cell">
        <title>Genome sequence of the white koji mold Aspergillus kawachii IFO 4308, used for brewing the Japanese distilled spirit shochu.</title>
        <authorList>
            <person name="Futagami T."/>
            <person name="Mori K."/>
            <person name="Yamashita A."/>
            <person name="Wada S."/>
            <person name="Kajiwara Y."/>
            <person name="Takashita H."/>
            <person name="Omori T."/>
            <person name="Takegawa K."/>
            <person name="Tashiro K."/>
            <person name="Kuhara S."/>
            <person name="Goto M."/>
        </authorList>
    </citation>
    <scope>NUCLEOTIDE SEQUENCE [LARGE SCALE GENOMIC DNA]</scope>
    <source>
        <strain>NBRC 4308</strain>
    </source>
</reference>
<gene>
    <name type="primary">eglB</name>
    <name type="synonym">cel5B</name>
    <name type="ORF">AKAW_03613</name>
</gene>
<name>EGLB_ASPKW</name>
<sequence>MKFQSTLLLAAAAGSALAVPHGPGHKKRASVFEWFGSNESGAEFGTNIPGVWGTDYIFPDPSAISTLIDKGMNFFRVQFMMERLLPDSMTGSYDEEYLANLTTVIKAVTDGGAHALVDPHNYGRYNGEIISSTSDFQTFWENLAGQYKDNDLVMFDTNNEYHDMDQDLVLNLNQAAINGIRAAGATSQYIFVEGNSWTGAWTWVDVNDNMKNLTDPEDKIVYEMHQYLDSDGSGTSETCVSETIGKERVTEATQWLKDNKKVGFIGEYAGGSNDVCRSAVSGMLEYMANNTDVWKGASWWAAGPWWGDYIFSMEPPDGTAYTGMLDILEAYL</sequence>
<evidence type="ECO:0000250" key="1"/>
<evidence type="ECO:0000255" key="2"/>
<evidence type="ECO:0000305" key="3"/>
<comment type="function">
    <text evidence="1">Has endoglucanase activity on substrates containing beta-1,4 glycosidic bonds, like in carboxymethylcellulose (CMC), hydroxyethylcellulose (HEC) and beta-glucan. Involved in the degradation of complex natural cellulosic substrates (By similarity).</text>
</comment>
<comment type="catalytic activity">
    <reaction>
        <text>Endohydrolysis of (1-&gt;4)-beta-D-glucosidic linkages in cellulose, lichenin and cereal beta-D-glucans.</text>
        <dbReference type="EC" id="3.2.1.4"/>
    </reaction>
</comment>
<comment type="subcellular location">
    <subcellularLocation>
        <location evidence="1">Secreted</location>
    </subcellularLocation>
</comment>
<comment type="similarity">
    <text evidence="3">Belongs to the glycosyl hydrolase 5 (cellulase A) family.</text>
</comment>
<accession>Q96WQ8</accession>
<accession>G7XEC0</accession>
<keyword id="KW-0119">Carbohydrate metabolism</keyword>
<keyword id="KW-0136">Cellulose degradation</keyword>
<keyword id="KW-0325">Glycoprotein</keyword>
<keyword id="KW-0326">Glycosidase</keyword>
<keyword id="KW-0378">Hydrolase</keyword>
<keyword id="KW-0624">Polysaccharide degradation</keyword>
<keyword id="KW-0964">Secreted</keyword>
<keyword id="KW-0732">Signal</keyword>
<organism>
    <name type="scientific">Aspergillus kawachii (strain NBRC 4308)</name>
    <name type="common">White koji mold</name>
    <name type="synonym">Aspergillus awamori var. kawachi</name>
    <dbReference type="NCBI Taxonomy" id="1033177"/>
    <lineage>
        <taxon>Eukaryota</taxon>
        <taxon>Fungi</taxon>
        <taxon>Dikarya</taxon>
        <taxon>Ascomycota</taxon>
        <taxon>Pezizomycotina</taxon>
        <taxon>Eurotiomycetes</taxon>
        <taxon>Eurotiomycetidae</taxon>
        <taxon>Eurotiales</taxon>
        <taxon>Aspergillaceae</taxon>
        <taxon>Aspergillus</taxon>
        <taxon>Aspergillus subgen. Circumdati</taxon>
    </lineage>
</organism>
<dbReference type="EC" id="3.2.1.4"/>
<dbReference type="EMBL" id="AB055433">
    <property type="protein sequence ID" value="BAB62319.1"/>
    <property type="molecule type" value="Genomic_DNA"/>
</dbReference>
<dbReference type="EMBL" id="DF126453">
    <property type="protein sequence ID" value="GAA85499.1"/>
    <property type="molecule type" value="Genomic_DNA"/>
</dbReference>
<dbReference type="SMR" id="Q96WQ8"/>
<dbReference type="STRING" id="1033177.Q96WQ8"/>
<dbReference type="CAZy" id="GH5">
    <property type="family name" value="Glycoside Hydrolase Family 5"/>
</dbReference>
<dbReference type="GlyCosmos" id="Q96WQ8">
    <property type="glycosylation" value="4 sites, No reported glycans"/>
</dbReference>
<dbReference type="VEuPathDB" id="FungiDB:AKAW_03613"/>
<dbReference type="eggNOG" id="ENOG502QXN4">
    <property type="taxonomic scope" value="Eukaryota"/>
</dbReference>
<dbReference type="InParanoid" id="Q96WQ8"/>
<dbReference type="OrthoDB" id="45539at5052"/>
<dbReference type="GO" id="GO:0005576">
    <property type="term" value="C:extracellular region"/>
    <property type="evidence" value="ECO:0007669"/>
    <property type="project" value="UniProtKB-SubCell"/>
</dbReference>
<dbReference type="GO" id="GO:0008810">
    <property type="term" value="F:cellulase activity"/>
    <property type="evidence" value="ECO:0007669"/>
    <property type="project" value="UniProtKB-EC"/>
</dbReference>
<dbReference type="GO" id="GO:0030245">
    <property type="term" value="P:cellulose catabolic process"/>
    <property type="evidence" value="ECO:0007669"/>
    <property type="project" value="UniProtKB-KW"/>
</dbReference>
<dbReference type="FunFam" id="3.20.20.80:FF:000078">
    <property type="entry name" value="Endo-beta-1,4-glucanase B"/>
    <property type="match status" value="1"/>
</dbReference>
<dbReference type="Gene3D" id="3.20.20.80">
    <property type="entry name" value="Glycosidases"/>
    <property type="match status" value="1"/>
</dbReference>
<dbReference type="InterPro" id="IPR001547">
    <property type="entry name" value="Glyco_hydro_5"/>
</dbReference>
<dbReference type="InterPro" id="IPR017853">
    <property type="entry name" value="Glycoside_hydrolase_SF"/>
</dbReference>
<dbReference type="PANTHER" id="PTHR34142">
    <property type="entry name" value="ENDO-BETA-1,4-GLUCANASE A"/>
    <property type="match status" value="1"/>
</dbReference>
<dbReference type="PANTHER" id="PTHR34142:SF6">
    <property type="entry name" value="ENDO-BETA-1,4-GLUCANASE B"/>
    <property type="match status" value="1"/>
</dbReference>
<dbReference type="Pfam" id="PF00150">
    <property type="entry name" value="Cellulase"/>
    <property type="match status" value="1"/>
</dbReference>
<dbReference type="SUPFAM" id="SSF51445">
    <property type="entry name" value="(Trans)glycosidases"/>
    <property type="match status" value="1"/>
</dbReference>
<protein>
    <recommendedName>
        <fullName>Probable endo-beta-1,4-glucanase B</fullName>
        <shortName>Endoglucanase B</shortName>
        <ecNumber>3.2.1.4</ecNumber>
    </recommendedName>
    <alternativeName>
        <fullName>Carboxymethylcellulase B</fullName>
    </alternativeName>
    <alternativeName>
        <fullName>Cellulase 5B</fullName>
    </alternativeName>
    <alternativeName>
        <fullName>Cellulase B</fullName>
    </alternativeName>
</protein>
<proteinExistence type="inferred from homology"/>